<protein>
    <recommendedName>
        <fullName>Cytochrome b</fullName>
    </recommendedName>
    <alternativeName>
        <fullName>Complex III subunit 3</fullName>
    </alternativeName>
    <alternativeName>
        <fullName>Complex III subunit III</fullName>
    </alternativeName>
    <alternativeName>
        <fullName>Cytochrome b-c1 complex subunit 3</fullName>
    </alternativeName>
    <alternativeName>
        <fullName>Ubiquinol-cytochrome-c reductase complex cytochrome b subunit</fullName>
    </alternativeName>
</protein>
<dbReference type="EMBL" id="AY445918">
    <property type="protein sequence ID" value="AAR10338.2"/>
    <property type="molecule type" value="Genomic_DNA"/>
</dbReference>
<dbReference type="RefSeq" id="YP_052711.2">
    <property type="nucleotide sequence ID" value="NC_005972.1"/>
</dbReference>
<dbReference type="SMR" id="Q6ED58"/>
<dbReference type="GeneID" id="2886005"/>
<dbReference type="GO" id="GO:0005743">
    <property type="term" value="C:mitochondrial inner membrane"/>
    <property type="evidence" value="ECO:0007669"/>
    <property type="project" value="UniProtKB-SubCell"/>
</dbReference>
<dbReference type="GO" id="GO:0045275">
    <property type="term" value="C:respiratory chain complex III"/>
    <property type="evidence" value="ECO:0007669"/>
    <property type="project" value="InterPro"/>
</dbReference>
<dbReference type="GO" id="GO:0046872">
    <property type="term" value="F:metal ion binding"/>
    <property type="evidence" value="ECO:0007669"/>
    <property type="project" value="UniProtKB-KW"/>
</dbReference>
<dbReference type="GO" id="GO:0008121">
    <property type="term" value="F:ubiquinol-cytochrome-c reductase activity"/>
    <property type="evidence" value="ECO:0007669"/>
    <property type="project" value="InterPro"/>
</dbReference>
<dbReference type="GO" id="GO:0006122">
    <property type="term" value="P:mitochondrial electron transport, ubiquinol to cytochrome c"/>
    <property type="evidence" value="ECO:0007669"/>
    <property type="project" value="TreeGrafter"/>
</dbReference>
<dbReference type="CDD" id="cd00290">
    <property type="entry name" value="cytochrome_b_C"/>
    <property type="match status" value="1"/>
</dbReference>
<dbReference type="CDD" id="cd00284">
    <property type="entry name" value="Cytochrome_b_N"/>
    <property type="match status" value="1"/>
</dbReference>
<dbReference type="Gene3D" id="1.20.810.10">
    <property type="entry name" value="Cytochrome Bc1 Complex, Chain C"/>
    <property type="match status" value="1"/>
</dbReference>
<dbReference type="InterPro" id="IPR005798">
    <property type="entry name" value="Cyt_b/b6_C"/>
</dbReference>
<dbReference type="InterPro" id="IPR036150">
    <property type="entry name" value="Cyt_b/b6_C_sf"/>
</dbReference>
<dbReference type="InterPro" id="IPR005797">
    <property type="entry name" value="Cyt_b/b6_N"/>
</dbReference>
<dbReference type="InterPro" id="IPR027387">
    <property type="entry name" value="Cytb/b6-like_sf"/>
</dbReference>
<dbReference type="InterPro" id="IPR030689">
    <property type="entry name" value="Cytochrome_b"/>
</dbReference>
<dbReference type="InterPro" id="IPR048260">
    <property type="entry name" value="Cytochrome_b_C_euk/bac"/>
</dbReference>
<dbReference type="InterPro" id="IPR048259">
    <property type="entry name" value="Cytochrome_b_N_euk/bac"/>
</dbReference>
<dbReference type="InterPro" id="IPR016174">
    <property type="entry name" value="Di-haem_cyt_TM"/>
</dbReference>
<dbReference type="PANTHER" id="PTHR19271">
    <property type="entry name" value="CYTOCHROME B"/>
    <property type="match status" value="1"/>
</dbReference>
<dbReference type="PANTHER" id="PTHR19271:SF16">
    <property type="entry name" value="CYTOCHROME B"/>
    <property type="match status" value="1"/>
</dbReference>
<dbReference type="Pfam" id="PF00032">
    <property type="entry name" value="Cytochrom_B_C"/>
    <property type="match status" value="1"/>
</dbReference>
<dbReference type="Pfam" id="PF00033">
    <property type="entry name" value="Cytochrome_B"/>
    <property type="match status" value="1"/>
</dbReference>
<dbReference type="PIRSF" id="PIRSF038885">
    <property type="entry name" value="COB"/>
    <property type="match status" value="1"/>
</dbReference>
<dbReference type="SUPFAM" id="SSF81648">
    <property type="entry name" value="a domain/subunit of cytochrome bc1 complex (Ubiquinol-cytochrome c reductase)"/>
    <property type="match status" value="1"/>
</dbReference>
<dbReference type="SUPFAM" id="SSF81342">
    <property type="entry name" value="Transmembrane di-heme cytochromes"/>
    <property type="match status" value="1"/>
</dbReference>
<dbReference type="PROSITE" id="PS51003">
    <property type="entry name" value="CYTB_CTER"/>
    <property type="match status" value="1"/>
</dbReference>
<dbReference type="PROSITE" id="PS51002">
    <property type="entry name" value="CYTB_NTER"/>
    <property type="match status" value="1"/>
</dbReference>
<feature type="chain" id="PRO_0000061742" description="Cytochrome b">
    <location>
        <begin position="1"/>
        <end position="384"/>
    </location>
</feature>
<feature type="transmembrane region" description="Helical" evidence="3">
    <location>
        <begin position="32"/>
        <end position="52"/>
    </location>
</feature>
<feature type="transmembrane region" description="Helical" evidence="3">
    <location>
        <begin position="76"/>
        <end position="98"/>
    </location>
</feature>
<feature type="transmembrane region" description="Helical" evidence="3">
    <location>
        <begin position="113"/>
        <end position="133"/>
    </location>
</feature>
<feature type="transmembrane region" description="Helical" evidence="3">
    <location>
        <begin position="179"/>
        <end position="199"/>
    </location>
</feature>
<feature type="transmembrane region" description="Helical" evidence="3">
    <location>
        <begin position="225"/>
        <end position="245"/>
    </location>
</feature>
<feature type="transmembrane region" description="Helical" evidence="3">
    <location>
        <begin position="289"/>
        <end position="309"/>
    </location>
</feature>
<feature type="transmembrane region" description="Helical" evidence="3">
    <location>
        <begin position="321"/>
        <end position="341"/>
    </location>
</feature>
<feature type="transmembrane region" description="Helical" evidence="3">
    <location>
        <begin position="348"/>
        <end position="368"/>
    </location>
</feature>
<feature type="binding site" description="axial binding residue" evidence="5">
    <location>
        <position position="82"/>
    </location>
    <ligand>
        <name>heme b</name>
        <dbReference type="ChEBI" id="CHEBI:60344"/>
        <label>b562</label>
    </ligand>
    <ligandPart>
        <name>Fe</name>
        <dbReference type="ChEBI" id="CHEBI:18248"/>
    </ligandPart>
</feature>
<feature type="binding site" description="axial binding residue" evidence="5">
    <location>
        <position position="96"/>
    </location>
    <ligand>
        <name>heme b</name>
        <dbReference type="ChEBI" id="CHEBI:60344"/>
        <label>b566</label>
    </ligand>
    <ligandPart>
        <name>Fe</name>
        <dbReference type="ChEBI" id="CHEBI:18248"/>
    </ligandPart>
</feature>
<feature type="binding site" description="axial binding residue" evidence="5">
    <location>
        <position position="183"/>
    </location>
    <ligand>
        <name>heme b</name>
        <dbReference type="ChEBI" id="CHEBI:60344"/>
        <label>b562</label>
    </ligand>
    <ligandPart>
        <name>Fe</name>
        <dbReference type="ChEBI" id="CHEBI:18248"/>
    </ligandPart>
</feature>
<feature type="binding site" description="axial binding residue" evidence="5">
    <location>
        <position position="197"/>
    </location>
    <ligand>
        <name>heme b</name>
        <dbReference type="ChEBI" id="CHEBI:60344"/>
        <label>b566</label>
    </ligand>
    <ligandPart>
        <name>Fe</name>
        <dbReference type="ChEBI" id="CHEBI:18248"/>
    </ligandPart>
</feature>
<feature type="binding site" evidence="2">
    <location>
        <position position="202"/>
    </location>
    <ligand>
        <name>a ubiquinone</name>
        <dbReference type="ChEBI" id="CHEBI:16389"/>
    </ligand>
</feature>
<evidence type="ECO:0000250" key="1"/>
<evidence type="ECO:0000250" key="2">
    <source>
        <dbReference type="UniProtKB" id="P00157"/>
    </source>
</evidence>
<evidence type="ECO:0000250" key="3">
    <source>
        <dbReference type="UniProtKB" id="P00163"/>
    </source>
</evidence>
<evidence type="ECO:0000255" key="4">
    <source>
        <dbReference type="PROSITE-ProRule" id="PRU00967"/>
    </source>
</evidence>
<evidence type="ECO:0000255" key="5">
    <source>
        <dbReference type="PROSITE-ProRule" id="PRU00968"/>
    </source>
</evidence>
<comment type="function">
    <text evidence="3">Component of the ubiquinol-cytochrome c reductase complex (complex III or cytochrome b-c1 complex) that is part of the mitochondrial respiratory chain. The b-c1 complex mediates electron transfer from ubiquinol to cytochrome c. Contributes to the generation of a proton gradient across the mitochondrial membrane that is then used for ATP synthesis.</text>
</comment>
<comment type="cofactor">
    <cofactor evidence="3">
        <name>heme b</name>
        <dbReference type="ChEBI" id="CHEBI:60344"/>
    </cofactor>
    <text evidence="3">Binds 2 heme b groups non-covalently.</text>
</comment>
<comment type="subunit">
    <text evidence="3">Fungal cytochrome b-c1 complex contains 10 subunits; 3 respiratory subunits, 2 core proteins and 5 low-molecular weight proteins. Cytochrome b-c1 complex is a homodimer.</text>
</comment>
<comment type="subcellular location">
    <subcellularLocation>
        <location evidence="3">Mitochondrion inner membrane</location>
        <topology evidence="3">Multi-pass membrane protein</topology>
    </subcellularLocation>
</comment>
<comment type="miscellaneous">
    <text evidence="1">Heme 1 (or BL or b562) is low-potential and absorbs at about 562 nm, and heme 2 (or BH or b566) is high-potential and absorbs at about 566 nm.</text>
</comment>
<comment type="similarity">
    <text evidence="4 5">Belongs to the cytochrome b family.</text>
</comment>
<comment type="caution">
    <text evidence="3">The protein contains only eight transmembrane helices, not nine as predicted by bioinformatics tools.</text>
</comment>
<keyword id="KW-0249">Electron transport</keyword>
<keyword id="KW-0349">Heme</keyword>
<keyword id="KW-0408">Iron</keyword>
<keyword id="KW-0472">Membrane</keyword>
<keyword id="KW-0479">Metal-binding</keyword>
<keyword id="KW-0496">Mitochondrion</keyword>
<keyword id="KW-0999">Mitochondrion inner membrane</keyword>
<keyword id="KW-0679">Respiratory chain</keyword>
<keyword id="KW-0812">Transmembrane</keyword>
<keyword id="KW-1133">Transmembrane helix</keyword>
<keyword id="KW-0813">Transport</keyword>
<keyword id="KW-0830">Ubiquinone</keyword>
<proteinExistence type="inferred from homology"/>
<accession>Q6ED58</accession>
<sequence length="384" mass="43874">MSIRKTNPFISMANSYVMDAPEPSNMSYFWNFGSLLGVCLVMQLCTGMFLAMHYCSNLDLAFISVQHMMTEVNYGWLLRYAHSNGAGFFFMFVYLHMARGIYYGSYRKPRMALWNMGVMMFLLMMMTAFMGYCLVYGQMSHWGATVMTNLVTAMPYLGQAMAEFIWGGSSVSNPTIQRFFSLHYLLPFVIAGICCLHLLALHSHGSNNPLGMTANIDRMPMHPFFLFKDTVTIFAFLFVYFFLISYYPEYLGDPENNIPGNPLVTPAAIVPEFYLLPFYAILRAISSKMMGVLAMLFAILILFVLPFVDFSIIRGNAFKFLSKILFGFFCVNFILLGLIGAMHIEVPYIIIGQLATIFYFSYFMILLPLISILENMLFYLAIKR</sequence>
<gene>
    <name type="primary">COB</name>
    <name type="synonym">CYTB</name>
</gene>
<geneLocation type="mitochondrion"/>
<organism>
    <name type="scientific">Starmerella bacillaris</name>
    <name type="common">Yeast</name>
    <name type="synonym">Candida zemplinina</name>
    <dbReference type="NCBI Taxonomy" id="1247836"/>
    <lineage>
        <taxon>Eukaryota</taxon>
        <taxon>Fungi</taxon>
        <taxon>Dikarya</taxon>
        <taxon>Ascomycota</taxon>
        <taxon>Saccharomycotina</taxon>
        <taxon>Dipodascomycetes</taxon>
        <taxon>Dipodascales</taxon>
        <taxon>Trichomonascaceae</taxon>
        <taxon>Starmerella</taxon>
    </lineage>
</organism>
<name>CYB_STABA</name>
<reference key="1">
    <citation type="submission" date="2007-10" db="EMBL/GenBank/DDBJ databases">
        <title>The complete mitochondrial genome of the wine yeast Candida stellata.</title>
        <authorList>
            <person name="Pramateftaki P.V."/>
            <person name="Lanaridis P."/>
            <person name="Typas M.A."/>
        </authorList>
    </citation>
    <scope>NUCLEOTIDE SEQUENCE [LARGE SCALE GENOMIC DNA]</scope>
    <source>
        <strain>CECT 11046</strain>
    </source>
</reference>